<keyword id="KW-1185">Reference proteome</keyword>
<keyword id="KW-1277">Toxin-antitoxin system</keyword>
<proteinExistence type="inferred from homology"/>
<name>RATA_RICPR</name>
<protein>
    <recommendedName>
        <fullName>Ribosome association toxin RatA</fullName>
    </recommendedName>
</protein>
<sequence length="146" mass="16902">MLSFQHTKILPYKPKKLFDLVWDIKSYPQFLPWCAAARIISENNQEVISELVIQLKGLSEKYNSRVINTITDNGIYLIDTVAISGPFEYLKSTWQFIPHSTGTELKFFINFKMTSVILDKLIGSYFTIATEKMILAFEKRAKEVIK</sequence>
<gene>
    <name type="primary">ratA</name>
    <name type="ordered locus">RP166</name>
</gene>
<dbReference type="EMBL" id="AJ235270">
    <property type="protein sequence ID" value="CAA14633.1"/>
    <property type="molecule type" value="Genomic_DNA"/>
</dbReference>
<dbReference type="PIR" id="B71727">
    <property type="entry name" value="B71727"/>
</dbReference>
<dbReference type="RefSeq" id="NP_220556.1">
    <property type="nucleotide sequence ID" value="NC_000963.1"/>
</dbReference>
<dbReference type="RefSeq" id="WP_004598627.1">
    <property type="nucleotide sequence ID" value="NC_000963.1"/>
</dbReference>
<dbReference type="SMR" id="Q9ZDZ7"/>
<dbReference type="STRING" id="272947.gene:17555249"/>
<dbReference type="EnsemblBacteria" id="CAA14633">
    <property type="protein sequence ID" value="CAA14633"/>
    <property type="gene ID" value="CAA14633"/>
</dbReference>
<dbReference type="KEGG" id="rpr:RP166"/>
<dbReference type="PATRIC" id="fig|272947.5.peg.171"/>
<dbReference type="eggNOG" id="COG2867">
    <property type="taxonomic scope" value="Bacteria"/>
</dbReference>
<dbReference type="HOGENOM" id="CLU_079653_3_1_5"/>
<dbReference type="OrthoDB" id="9804759at2"/>
<dbReference type="Proteomes" id="UP000002480">
    <property type="component" value="Chromosome"/>
</dbReference>
<dbReference type="GO" id="GO:0048039">
    <property type="term" value="F:ubiquinone binding"/>
    <property type="evidence" value="ECO:0007669"/>
    <property type="project" value="InterPro"/>
</dbReference>
<dbReference type="GO" id="GO:0045333">
    <property type="term" value="P:cellular respiration"/>
    <property type="evidence" value="ECO:0007669"/>
    <property type="project" value="InterPro"/>
</dbReference>
<dbReference type="CDD" id="cd07813">
    <property type="entry name" value="COQ10p_like"/>
    <property type="match status" value="1"/>
</dbReference>
<dbReference type="Gene3D" id="3.30.530.20">
    <property type="match status" value="1"/>
</dbReference>
<dbReference type="InterPro" id="IPR044996">
    <property type="entry name" value="COQ10-like"/>
</dbReference>
<dbReference type="InterPro" id="IPR005031">
    <property type="entry name" value="COQ10_START"/>
</dbReference>
<dbReference type="InterPro" id="IPR023393">
    <property type="entry name" value="START-like_dom_sf"/>
</dbReference>
<dbReference type="PANTHER" id="PTHR12901:SF10">
    <property type="entry name" value="COENZYME Q-BINDING PROTEIN COQ10, MITOCHONDRIAL"/>
    <property type="match status" value="1"/>
</dbReference>
<dbReference type="PANTHER" id="PTHR12901">
    <property type="entry name" value="SPERM PROTEIN HOMOLOG"/>
    <property type="match status" value="1"/>
</dbReference>
<dbReference type="Pfam" id="PF03364">
    <property type="entry name" value="Polyketide_cyc"/>
    <property type="match status" value="1"/>
</dbReference>
<dbReference type="SUPFAM" id="SSF55961">
    <property type="entry name" value="Bet v1-like"/>
    <property type="match status" value="1"/>
</dbReference>
<comment type="function">
    <text evidence="1">Toxic component of a type II toxin-antitoxin (TA) system. Binds to 50S ribosomal subunits, preventing them from associating with 30S subunits to form 70S ribosomes. Its antitoxin is unknown (By similarity).</text>
</comment>
<comment type="similarity">
    <text evidence="2">Belongs to the ribosome association toxin RatA family.</text>
</comment>
<evidence type="ECO:0000250" key="1"/>
<evidence type="ECO:0000305" key="2"/>
<feature type="chain" id="PRO_0000192477" description="Ribosome association toxin RatA">
    <location>
        <begin position="1"/>
        <end position="146"/>
    </location>
</feature>
<organism>
    <name type="scientific">Rickettsia prowazekii (strain Madrid E)</name>
    <dbReference type="NCBI Taxonomy" id="272947"/>
    <lineage>
        <taxon>Bacteria</taxon>
        <taxon>Pseudomonadati</taxon>
        <taxon>Pseudomonadota</taxon>
        <taxon>Alphaproteobacteria</taxon>
        <taxon>Rickettsiales</taxon>
        <taxon>Rickettsiaceae</taxon>
        <taxon>Rickettsieae</taxon>
        <taxon>Rickettsia</taxon>
        <taxon>typhus group</taxon>
    </lineage>
</organism>
<reference key="1">
    <citation type="journal article" date="1998" name="Nature">
        <title>The genome sequence of Rickettsia prowazekii and the origin of mitochondria.</title>
        <authorList>
            <person name="Andersson S.G.E."/>
            <person name="Zomorodipour A."/>
            <person name="Andersson J.O."/>
            <person name="Sicheritz-Ponten T."/>
            <person name="Alsmark U.C.M."/>
            <person name="Podowski R.M."/>
            <person name="Naeslund A.K."/>
            <person name="Eriksson A.-S."/>
            <person name="Winkler H.H."/>
            <person name="Kurland C.G."/>
        </authorList>
    </citation>
    <scope>NUCLEOTIDE SEQUENCE [LARGE SCALE GENOMIC DNA]</scope>
    <source>
        <strain>Madrid E</strain>
    </source>
</reference>
<accession>Q9ZDZ7</accession>